<feature type="chain" id="PRO_0000243982" description="Probable ubiquitin-conjugating enzyme E2 R521">
    <location>
        <begin position="1"/>
        <end position="1441"/>
    </location>
</feature>
<feature type="transmembrane region" description="Helical" evidence="1">
    <location>
        <begin position="20"/>
        <end position="40"/>
    </location>
</feature>
<feature type="domain" description="UBC core" evidence="2">
    <location>
        <begin position="1217"/>
        <end position="1380"/>
    </location>
</feature>
<feature type="region of interest" description="Disordered" evidence="3">
    <location>
        <begin position="180"/>
        <end position="207"/>
    </location>
</feature>
<feature type="region of interest" description="Disordered" evidence="3">
    <location>
        <begin position="283"/>
        <end position="305"/>
    </location>
</feature>
<feature type="region of interest" description="Disordered" evidence="3">
    <location>
        <begin position="505"/>
        <end position="554"/>
    </location>
</feature>
<feature type="region of interest" description="Disordered" evidence="3">
    <location>
        <begin position="577"/>
        <end position="605"/>
    </location>
</feature>
<feature type="coiled-coil region" evidence="1">
    <location>
        <begin position="63"/>
        <end position="89"/>
    </location>
</feature>
<feature type="coiled-coil region" evidence="1">
    <location>
        <begin position="340"/>
        <end position="368"/>
    </location>
</feature>
<feature type="compositionally biased region" description="Basic and acidic residues" evidence="3">
    <location>
        <begin position="180"/>
        <end position="199"/>
    </location>
</feature>
<feature type="compositionally biased region" description="Low complexity" evidence="3">
    <location>
        <begin position="286"/>
        <end position="303"/>
    </location>
</feature>
<feature type="compositionally biased region" description="Low complexity" evidence="3">
    <location>
        <begin position="505"/>
        <end position="538"/>
    </location>
</feature>
<feature type="compositionally biased region" description="Acidic residues" evidence="3">
    <location>
        <begin position="539"/>
        <end position="549"/>
    </location>
</feature>
<feature type="active site" description="Glycyl thioester intermediate" evidence="2">
    <location>
        <position position="1306"/>
    </location>
</feature>
<organismHost>
    <name type="scientific">Acanthamoeba polyphaga</name>
    <name type="common">Amoeba</name>
    <dbReference type="NCBI Taxonomy" id="5757"/>
</organismHost>
<reference key="1">
    <citation type="journal article" date="2004" name="Science">
        <title>The 1.2-megabase genome sequence of Mimivirus.</title>
        <authorList>
            <person name="Raoult D."/>
            <person name="Audic S."/>
            <person name="Robert C."/>
            <person name="Abergel C."/>
            <person name="Renesto P."/>
            <person name="Ogata H."/>
            <person name="La Scola B."/>
            <person name="Susan M."/>
            <person name="Claverie J.-M."/>
        </authorList>
    </citation>
    <scope>NUCLEOTIDE SEQUENCE [LARGE SCALE GENOMIC DNA]</scope>
    <source>
        <strain>Rowbotham-Bradford</strain>
    </source>
</reference>
<organism>
    <name type="scientific">Acanthamoeba polyphaga mimivirus</name>
    <name type="common">APMV</name>
    <dbReference type="NCBI Taxonomy" id="212035"/>
    <lineage>
        <taxon>Viruses</taxon>
        <taxon>Varidnaviria</taxon>
        <taxon>Bamfordvirae</taxon>
        <taxon>Nucleocytoviricota</taxon>
        <taxon>Megaviricetes</taxon>
        <taxon>Imitervirales</taxon>
        <taxon>Mimiviridae</taxon>
        <taxon>Megamimivirinae</taxon>
        <taxon>Mimivirus</taxon>
        <taxon>Mimivirus bradfordmassiliense</taxon>
    </lineage>
</organism>
<protein>
    <recommendedName>
        <fullName>Probable ubiquitin-conjugating enzyme E2 R521</fullName>
        <ecNumber>2.3.2.23</ecNumber>
    </recommendedName>
    <alternativeName>
        <fullName>E2 ubiquitin-conjugating enzyme R521</fullName>
    </alternativeName>
    <alternativeName>
        <fullName>Ubiquitin carrier protein</fullName>
    </alternativeName>
    <alternativeName>
        <fullName>Ubiquitin-protein ligase</fullName>
    </alternativeName>
</protein>
<name>UBC3_MIMIV</name>
<evidence type="ECO:0000255" key="1"/>
<evidence type="ECO:0000255" key="2">
    <source>
        <dbReference type="PROSITE-ProRule" id="PRU00388"/>
    </source>
</evidence>
<evidence type="ECO:0000256" key="3">
    <source>
        <dbReference type="SAM" id="MobiDB-lite"/>
    </source>
</evidence>
<evidence type="ECO:0000305" key="4"/>
<sequence length="1441" mass="165046">MHDYLGSFYNPLTLQKKLKYIHHIIINYITNSILYFFLIMQSKNNPKHNSMKFKEQTESPILNQSKLVNTLDIIKDEINKWEEKNTDKDIKIVSIDNGKIVLSMVYGKQHIIEILCPKDYPNVKSGFSCKEIKTVNTIPLSFISQANNQLKSKKNLSVHRIISHLSTTFQNYKKALKSKVSKDKMKDKSESNSEHEQESKSVVSNEIPSEVSIDSKLTKDINFINDLIKEANKCSNDVPSDSDETHQEVDDRPLTEEVVVPDPTRIVRRRNSKLQTGSTKIKIFGKSKNSGPSSSKTSISSMSKVEELEDKNPYLQEQDIMSIIQDEWNKVQESKSICPTTNEDNNDLDNLINEVERLVQETKDQETKDQETKDQKEIWASSLTIEEPNGENFEEFSWEVPNETSQITVVEPVQEATEEPVQNVTEELIQLVADEPVQETVKDSVQEVAEESVQETTVEAVQEIAEESVQQVVEESVQETTVEPVQEVAEEAVQQVVEESVQETTVEPVQEVAEEPVQQEVAEEPVQQEVAEEPVQQEVAEEPVQEVAEEPVQKATEELVQQEVAEDIVKLDVTVQNDFSDHSDSPEPSDSSDSEEEITNSNNLGRYFKIYDPTTGKTTGVYVGKTPTQAANKAFIKTFSNDNTGNKKEFYLQEYTGNKPGKIYKYEGTRQKLNQPQKISIPLYGDGQYKTITYNYKNTVVKKNVPDSIKNPPKTIKKSIKPVKKSIKPVKKLSTTKLDSQTNSVKEKSENKDIINYNDTGDKYGLYIDFGKFFKNSKIPFDLEKLRDNALKLSNQENQDDNYSTMKLRNFKNNNAVNLMINDFTKLYNDGVKNGYNIEPVNNNIYDLDILLSSNFLDKDSVLYQDMINLKIDHIKINIKINHKMYPFYPPQVSLIRPTIENNVAAIIATIDYLFANKWNPMISIVNIVNDIRNILNKYGALDEKKYQNNLDPIFHDLVELSLLTGTQCSMYQSDQKVIDLSNNSTNEKQSKYWKKGTGFGHSGLSDWDFNQTKENIKNRELKIYQCLRKIVVKLTKIILGKNQVDVINILKESCFIPYLKLVFIDGSLFDLVKDLSYFELVLNSMRILTKEYLPLFLHKYNDKSLLEVLDQFNKDCHSYLNTLKNIKESDCQNEIDIIENFMSFYKRLSTSIEKFNEITESNNKEEVISNDVKDLYKITLGNEVFQEYNLDLNKFANMLTNDTKKEGLIHKDALKAISRELLSHSKNLPVEYGSSIYYRYSPENIRYHEFIITGPEDSPYDSGCFHFRMYNPSAYPNTSPFVSMTTTGHGSVRFNPNLYADGKVCLSILGTWRGQAGESWIPGVSSMLQVMISIQSLVLISEPYFNEPGYESSRGTDKGNKLSTEYNQKVRFNCMKWAMIDVIKNPVPGFESMIKKHFSIKAPHIKQVCQTWINEAPDNNKSEYQKLYDELIGLLDSLVA</sequence>
<accession>Q5UQ88</accession>
<dbReference type="EC" id="2.3.2.23"/>
<dbReference type="EMBL" id="AY653733">
    <property type="protein sequence ID" value="AAV50785.1"/>
    <property type="molecule type" value="Genomic_DNA"/>
</dbReference>
<dbReference type="SMR" id="Q5UQ88"/>
<dbReference type="UniPathway" id="UPA00143"/>
<dbReference type="Proteomes" id="UP000001134">
    <property type="component" value="Genome"/>
</dbReference>
<dbReference type="GO" id="GO:0016020">
    <property type="term" value="C:membrane"/>
    <property type="evidence" value="ECO:0007669"/>
    <property type="project" value="UniProtKB-SubCell"/>
</dbReference>
<dbReference type="GO" id="GO:0005524">
    <property type="term" value="F:ATP binding"/>
    <property type="evidence" value="ECO:0007669"/>
    <property type="project" value="UniProtKB-KW"/>
</dbReference>
<dbReference type="GO" id="GO:0061631">
    <property type="term" value="F:ubiquitin conjugating enzyme activity"/>
    <property type="evidence" value="ECO:0007669"/>
    <property type="project" value="UniProtKB-EC"/>
</dbReference>
<dbReference type="GO" id="GO:0042262">
    <property type="term" value="P:DNA protection"/>
    <property type="evidence" value="ECO:0007669"/>
    <property type="project" value="InterPro"/>
</dbReference>
<dbReference type="GO" id="GO:0016567">
    <property type="term" value="P:protein ubiquitination"/>
    <property type="evidence" value="ECO:0007669"/>
    <property type="project" value="UniProtKB-UniPathway"/>
</dbReference>
<dbReference type="CDD" id="cd23810">
    <property type="entry name" value="UBCc_BIRC6"/>
    <property type="match status" value="1"/>
</dbReference>
<dbReference type="CDD" id="cd23802">
    <property type="entry name" value="UBCc_UBE2Q"/>
    <property type="match status" value="1"/>
</dbReference>
<dbReference type="Gene3D" id="3.10.470.10">
    <property type="entry name" value="Chromosomal protein MC1"/>
    <property type="match status" value="1"/>
</dbReference>
<dbReference type="Gene3D" id="3.10.110.10">
    <property type="entry name" value="Ubiquitin Conjugating Enzyme"/>
    <property type="match status" value="2"/>
</dbReference>
<dbReference type="InterPro" id="IPR036620">
    <property type="entry name" value="MC1_sf"/>
</dbReference>
<dbReference type="InterPro" id="IPR000608">
    <property type="entry name" value="UBQ-conjugat_E2_core"/>
</dbReference>
<dbReference type="InterPro" id="IPR016135">
    <property type="entry name" value="UBQ-conjugating_enzyme/RWD"/>
</dbReference>
<dbReference type="PANTHER" id="PTHR46116">
    <property type="entry name" value="(E3-INDEPENDENT) E2 UBIQUITIN-CONJUGATING ENZYME"/>
    <property type="match status" value="1"/>
</dbReference>
<dbReference type="PANTHER" id="PTHR46116:SF39">
    <property type="entry name" value="BACULOVIRAL IAP REPEAT-CONTAINING PROTEIN 6"/>
    <property type="match status" value="1"/>
</dbReference>
<dbReference type="Pfam" id="PF00179">
    <property type="entry name" value="UQ_con"/>
    <property type="match status" value="1"/>
</dbReference>
<dbReference type="SMART" id="SM00212">
    <property type="entry name" value="UBCc"/>
    <property type="match status" value="1"/>
</dbReference>
<dbReference type="SUPFAM" id="SSF102875">
    <property type="entry name" value="Chromosomal protein MC1"/>
    <property type="match status" value="1"/>
</dbReference>
<dbReference type="SUPFAM" id="SSF54495">
    <property type="entry name" value="UBC-like"/>
    <property type="match status" value="2"/>
</dbReference>
<dbReference type="PROSITE" id="PS50127">
    <property type="entry name" value="UBC_2"/>
    <property type="match status" value="1"/>
</dbReference>
<keyword id="KW-0067">ATP-binding</keyword>
<keyword id="KW-0175">Coiled coil</keyword>
<keyword id="KW-0472">Membrane</keyword>
<keyword id="KW-0547">Nucleotide-binding</keyword>
<keyword id="KW-1185">Reference proteome</keyword>
<keyword id="KW-0808">Transferase</keyword>
<keyword id="KW-0812">Transmembrane</keyword>
<keyword id="KW-1133">Transmembrane helix</keyword>
<keyword id="KW-0833">Ubl conjugation pathway</keyword>
<proteinExistence type="inferred from homology"/>
<gene>
    <name type="ordered locus">MIMI_R521</name>
</gene>
<comment type="function">
    <text evidence="2">Catalyzes the covalent attachment of ubiquitin to other proteins.</text>
</comment>
<comment type="catalytic activity">
    <reaction evidence="2">
        <text>S-ubiquitinyl-[E1 ubiquitin-activating enzyme]-L-cysteine + [E2 ubiquitin-conjugating enzyme]-L-cysteine = [E1 ubiquitin-activating enzyme]-L-cysteine + S-ubiquitinyl-[E2 ubiquitin-conjugating enzyme]-L-cysteine.</text>
        <dbReference type="EC" id="2.3.2.23"/>
    </reaction>
</comment>
<comment type="pathway">
    <text evidence="2">Protein modification; protein ubiquitination.</text>
</comment>
<comment type="subcellular location">
    <subcellularLocation>
        <location evidence="4">Membrane</location>
        <topology evidence="4">Single-pass membrane protein</topology>
    </subcellularLocation>
</comment>
<comment type="similarity">
    <text evidence="2">Belongs to the ubiquitin-conjugating enzyme family.</text>
</comment>